<gene>
    <name type="primary">MT-CYB</name>
    <name type="synonym">COB</name>
    <name type="synonym">CYTB</name>
    <name type="synonym">MTCYB</name>
</gene>
<protein>
    <recommendedName>
        <fullName>Cytochrome b</fullName>
    </recommendedName>
    <alternativeName>
        <fullName>Complex III subunit 3</fullName>
    </alternativeName>
    <alternativeName>
        <fullName>Complex III subunit III</fullName>
    </alternativeName>
    <alternativeName>
        <fullName>Cytochrome b-c1 complex subunit 3</fullName>
    </alternativeName>
    <alternativeName>
        <fullName>Ubiquinol-cytochrome-c reductase complex cytochrome b subunit</fullName>
    </alternativeName>
</protein>
<organism>
    <name type="scientific">Microtus socialis</name>
    <name type="common">Social vole</name>
    <dbReference type="NCBI Taxonomy" id="269658"/>
    <lineage>
        <taxon>Eukaryota</taxon>
        <taxon>Metazoa</taxon>
        <taxon>Chordata</taxon>
        <taxon>Craniata</taxon>
        <taxon>Vertebrata</taxon>
        <taxon>Euteleostomi</taxon>
        <taxon>Mammalia</taxon>
        <taxon>Eutheria</taxon>
        <taxon>Euarchontoglires</taxon>
        <taxon>Glires</taxon>
        <taxon>Rodentia</taxon>
        <taxon>Myomorpha</taxon>
        <taxon>Muroidea</taxon>
        <taxon>Cricetidae</taxon>
        <taxon>Arvicolinae</taxon>
        <taxon>Microtus</taxon>
    </lineage>
</organism>
<comment type="function">
    <text evidence="2">Component of the ubiquinol-cytochrome c reductase complex (complex III or cytochrome b-c1 complex) that is part of the mitochondrial respiratory chain. The b-c1 complex mediates electron transfer from ubiquinol to cytochrome c. Contributes to the generation of a proton gradient across the mitochondrial membrane that is then used for ATP synthesis.</text>
</comment>
<comment type="cofactor">
    <cofactor evidence="2">
        <name>heme b</name>
        <dbReference type="ChEBI" id="CHEBI:60344"/>
    </cofactor>
    <text evidence="2">Binds 2 heme b groups non-covalently.</text>
</comment>
<comment type="subunit">
    <text evidence="2">The cytochrome bc1 complex contains 11 subunits: 3 respiratory subunits (MT-CYB, CYC1 and UQCRFS1), 2 core proteins (UQCRC1 and UQCRC2) and 6 low-molecular weight proteins (UQCRH/QCR6, UQCRB/QCR7, UQCRQ/QCR8, UQCR10/QCR9, UQCR11/QCR10 and a cleavage product of UQCRFS1). This cytochrome bc1 complex then forms a dimer.</text>
</comment>
<comment type="subcellular location">
    <subcellularLocation>
        <location evidence="2">Mitochondrion inner membrane</location>
        <topology evidence="2">Multi-pass membrane protein</topology>
    </subcellularLocation>
</comment>
<comment type="miscellaneous">
    <text evidence="1">Heme 1 (or BL or b562) is low-potential and absorbs at about 562 nm, and heme 2 (or BH or b566) is high-potential and absorbs at about 566 nm.</text>
</comment>
<comment type="similarity">
    <text evidence="3 4">Belongs to the cytochrome b family.</text>
</comment>
<comment type="caution">
    <text evidence="2">The full-length protein contains only eight transmembrane helices, not nine as predicted by bioinformatics tools.</text>
</comment>
<evidence type="ECO:0000250" key="1"/>
<evidence type="ECO:0000250" key="2">
    <source>
        <dbReference type="UniProtKB" id="P00157"/>
    </source>
</evidence>
<evidence type="ECO:0000255" key="3">
    <source>
        <dbReference type="PROSITE-ProRule" id="PRU00967"/>
    </source>
</evidence>
<evidence type="ECO:0000255" key="4">
    <source>
        <dbReference type="PROSITE-ProRule" id="PRU00968"/>
    </source>
</evidence>
<keyword id="KW-0249">Electron transport</keyword>
<keyword id="KW-0349">Heme</keyword>
<keyword id="KW-0408">Iron</keyword>
<keyword id="KW-0472">Membrane</keyword>
<keyword id="KW-0479">Metal-binding</keyword>
<keyword id="KW-0496">Mitochondrion</keyword>
<keyword id="KW-0999">Mitochondrion inner membrane</keyword>
<keyword id="KW-0679">Respiratory chain</keyword>
<keyword id="KW-0812">Transmembrane</keyword>
<keyword id="KW-1133">Transmembrane helix</keyword>
<keyword id="KW-0813">Transport</keyword>
<keyword id="KW-0830">Ubiquinone</keyword>
<reference key="1">
    <citation type="journal article" date="2004" name="Mol. Phylogenet. Evol.">
        <title>Molecular phylogeny of the speciose vole genus Microtus (Arvicolinae, Rodentia) inferred from mitochondrial DNA sequences.</title>
        <authorList>
            <person name="Jaarola M."/>
            <person name="Martinkova N."/>
            <person name="Gunduz I."/>
            <person name="Brunhoff C."/>
            <person name="Zima J."/>
            <person name="Nadachowski A."/>
            <person name="Amori G."/>
            <person name="Bulatova N.S."/>
            <person name="Chondropoulos B."/>
            <person name="Fraguedakis-Tsolis S."/>
            <person name="Gonzalez-Esteban J."/>
            <person name="Lopez-Fuster M.J."/>
            <person name="Kandaurov A.S."/>
            <person name="Kefelioglu H."/>
            <person name="Mathias M.L."/>
            <person name="Villate I."/>
            <person name="Searle J.B."/>
        </authorList>
    </citation>
    <scope>NUCLEOTIDE SEQUENCE [GENOMIC DNA]</scope>
    <source>
        <strain>Isolate 1</strain>
        <strain>Isolate 2</strain>
        <strain>Isolate 3</strain>
    </source>
</reference>
<dbReference type="EMBL" id="AY513829">
    <property type="protein sequence ID" value="AAS82821.1"/>
    <property type="molecule type" value="Genomic_DNA"/>
</dbReference>
<dbReference type="EMBL" id="AY513830">
    <property type="protein sequence ID" value="AAS82822.1"/>
    <property type="molecule type" value="Genomic_DNA"/>
</dbReference>
<dbReference type="EMBL" id="AY513831">
    <property type="protein sequence ID" value="AAS82823.1"/>
    <property type="molecule type" value="Genomic_DNA"/>
</dbReference>
<dbReference type="SMR" id="Q6JDQ6"/>
<dbReference type="GO" id="GO:0005743">
    <property type="term" value="C:mitochondrial inner membrane"/>
    <property type="evidence" value="ECO:0007669"/>
    <property type="project" value="UniProtKB-SubCell"/>
</dbReference>
<dbReference type="GO" id="GO:0045275">
    <property type="term" value="C:respiratory chain complex III"/>
    <property type="evidence" value="ECO:0007669"/>
    <property type="project" value="InterPro"/>
</dbReference>
<dbReference type="GO" id="GO:0046872">
    <property type="term" value="F:metal ion binding"/>
    <property type="evidence" value="ECO:0007669"/>
    <property type="project" value="UniProtKB-KW"/>
</dbReference>
<dbReference type="GO" id="GO:0008121">
    <property type="term" value="F:ubiquinol-cytochrome-c reductase activity"/>
    <property type="evidence" value="ECO:0007669"/>
    <property type="project" value="InterPro"/>
</dbReference>
<dbReference type="GO" id="GO:0006122">
    <property type="term" value="P:mitochondrial electron transport, ubiquinol to cytochrome c"/>
    <property type="evidence" value="ECO:0007669"/>
    <property type="project" value="TreeGrafter"/>
</dbReference>
<dbReference type="CDD" id="cd00290">
    <property type="entry name" value="cytochrome_b_C"/>
    <property type="match status" value="1"/>
</dbReference>
<dbReference type="CDD" id="cd00284">
    <property type="entry name" value="Cytochrome_b_N"/>
    <property type="match status" value="1"/>
</dbReference>
<dbReference type="FunFam" id="1.20.810.10:FF:000002">
    <property type="entry name" value="Cytochrome b"/>
    <property type="match status" value="1"/>
</dbReference>
<dbReference type="Gene3D" id="1.20.810.10">
    <property type="entry name" value="Cytochrome Bc1 Complex, Chain C"/>
    <property type="match status" value="1"/>
</dbReference>
<dbReference type="InterPro" id="IPR005798">
    <property type="entry name" value="Cyt_b/b6_C"/>
</dbReference>
<dbReference type="InterPro" id="IPR036150">
    <property type="entry name" value="Cyt_b/b6_C_sf"/>
</dbReference>
<dbReference type="InterPro" id="IPR005797">
    <property type="entry name" value="Cyt_b/b6_N"/>
</dbReference>
<dbReference type="InterPro" id="IPR027387">
    <property type="entry name" value="Cytb/b6-like_sf"/>
</dbReference>
<dbReference type="InterPro" id="IPR030689">
    <property type="entry name" value="Cytochrome_b"/>
</dbReference>
<dbReference type="InterPro" id="IPR048260">
    <property type="entry name" value="Cytochrome_b_C_euk/bac"/>
</dbReference>
<dbReference type="InterPro" id="IPR048259">
    <property type="entry name" value="Cytochrome_b_N_euk/bac"/>
</dbReference>
<dbReference type="InterPro" id="IPR016174">
    <property type="entry name" value="Di-haem_cyt_TM"/>
</dbReference>
<dbReference type="PANTHER" id="PTHR19271">
    <property type="entry name" value="CYTOCHROME B"/>
    <property type="match status" value="1"/>
</dbReference>
<dbReference type="PANTHER" id="PTHR19271:SF16">
    <property type="entry name" value="CYTOCHROME B"/>
    <property type="match status" value="1"/>
</dbReference>
<dbReference type="Pfam" id="PF00032">
    <property type="entry name" value="Cytochrom_B_C"/>
    <property type="match status" value="1"/>
</dbReference>
<dbReference type="Pfam" id="PF00033">
    <property type="entry name" value="Cytochrome_B"/>
    <property type="match status" value="1"/>
</dbReference>
<dbReference type="PIRSF" id="PIRSF038885">
    <property type="entry name" value="COB"/>
    <property type="match status" value="1"/>
</dbReference>
<dbReference type="SUPFAM" id="SSF81648">
    <property type="entry name" value="a domain/subunit of cytochrome bc1 complex (Ubiquinol-cytochrome c reductase)"/>
    <property type="match status" value="1"/>
</dbReference>
<dbReference type="SUPFAM" id="SSF81342">
    <property type="entry name" value="Transmembrane di-heme cytochromes"/>
    <property type="match status" value="1"/>
</dbReference>
<dbReference type="PROSITE" id="PS51003">
    <property type="entry name" value="CYTB_CTER"/>
    <property type="match status" value="1"/>
</dbReference>
<dbReference type="PROSITE" id="PS51002">
    <property type="entry name" value="CYTB_NTER"/>
    <property type="match status" value="1"/>
</dbReference>
<proteinExistence type="inferred from homology"/>
<sequence length="380" mass="42940">MTIIRKKHPLIKIINHSFIDLPAPSNISSWWNFGSLLGLCLIIQILTGLFLAMHYTSDTATAFSSVTHICRDVNYGWLIRYMHANGASMFFICLFLHVGRGIYYGSYNMIETWNMGIVLLFAVMATAFMGYVLPWGQMSFWGATVITNLLSAIPYIGTTLVEWIWGGFSVDKATLTRFFAFHFILPFIITALVLVHLLFLHETGSNNPTGLNSDADKIPFHPYYTIKDFLGVLILLMAFMILTLFFPDILGDPDNYTPANPLNTPPHIKPEWYFLFAYAILRSIPNKLGGVLALILSIVILAFMPLLHTSKQRALTFRPITQTMYWILVADLLILTWIGGQPVEYPFIIIGQTASIAYFTIIVILMPMAGMFENNILDLD</sequence>
<accession>Q6JDQ6</accession>
<accession>Q6JDQ5</accession>
<feature type="chain" id="PRO_0000255092" description="Cytochrome b">
    <location>
        <begin position="1"/>
        <end position="380"/>
    </location>
</feature>
<feature type="transmembrane region" description="Helical" evidence="2">
    <location>
        <begin position="33"/>
        <end position="53"/>
    </location>
</feature>
<feature type="transmembrane region" description="Helical" evidence="2">
    <location>
        <begin position="77"/>
        <end position="98"/>
    </location>
</feature>
<feature type="transmembrane region" description="Helical" evidence="2">
    <location>
        <begin position="113"/>
        <end position="133"/>
    </location>
</feature>
<feature type="transmembrane region" description="Helical" evidence="2">
    <location>
        <begin position="178"/>
        <end position="198"/>
    </location>
</feature>
<feature type="transmembrane region" description="Helical" evidence="2">
    <location>
        <begin position="226"/>
        <end position="246"/>
    </location>
</feature>
<feature type="transmembrane region" description="Helical" evidence="2">
    <location>
        <begin position="288"/>
        <end position="308"/>
    </location>
</feature>
<feature type="transmembrane region" description="Helical" evidence="2">
    <location>
        <begin position="320"/>
        <end position="340"/>
    </location>
</feature>
<feature type="transmembrane region" description="Helical" evidence="2">
    <location>
        <begin position="347"/>
        <end position="367"/>
    </location>
</feature>
<feature type="binding site" description="axial binding residue" evidence="2">
    <location>
        <position position="83"/>
    </location>
    <ligand>
        <name>heme b</name>
        <dbReference type="ChEBI" id="CHEBI:60344"/>
        <label>b562</label>
    </ligand>
    <ligandPart>
        <name>Fe</name>
        <dbReference type="ChEBI" id="CHEBI:18248"/>
    </ligandPart>
</feature>
<feature type="binding site" description="axial binding residue" evidence="2">
    <location>
        <position position="97"/>
    </location>
    <ligand>
        <name>heme b</name>
        <dbReference type="ChEBI" id="CHEBI:60344"/>
        <label>b566</label>
    </ligand>
    <ligandPart>
        <name>Fe</name>
        <dbReference type="ChEBI" id="CHEBI:18248"/>
    </ligandPart>
</feature>
<feature type="binding site" description="axial binding residue" evidence="2">
    <location>
        <position position="182"/>
    </location>
    <ligand>
        <name>heme b</name>
        <dbReference type="ChEBI" id="CHEBI:60344"/>
        <label>b562</label>
    </ligand>
    <ligandPart>
        <name>Fe</name>
        <dbReference type="ChEBI" id="CHEBI:18248"/>
    </ligandPart>
</feature>
<feature type="binding site" description="axial binding residue" evidence="2">
    <location>
        <position position="196"/>
    </location>
    <ligand>
        <name>heme b</name>
        <dbReference type="ChEBI" id="CHEBI:60344"/>
        <label>b566</label>
    </ligand>
    <ligandPart>
        <name>Fe</name>
        <dbReference type="ChEBI" id="CHEBI:18248"/>
    </ligandPart>
</feature>
<feature type="binding site" evidence="2">
    <location>
        <position position="201"/>
    </location>
    <ligand>
        <name>a ubiquinone</name>
        <dbReference type="ChEBI" id="CHEBI:16389"/>
    </ligand>
</feature>
<feature type="sequence variant" description="In strain: Isolate 3.">
    <original>V</original>
    <variation>I</variation>
    <location>
        <position position="118"/>
    </location>
</feature>
<feature type="sequence variant" description="In strain: Isolate 3.">
    <original>RA</original>
    <variation>QT</variation>
    <location>
        <begin position="313"/>
        <end position="314"/>
    </location>
</feature>
<name>CYB_MICSO</name>
<geneLocation type="mitochondrion"/>